<gene>
    <name evidence="1" type="primary">ruvC</name>
    <name type="ordered locus">Shewana3_1955</name>
</gene>
<evidence type="ECO:0000255" key="1">
    <source>
        <dbReference type="HAMAP-Rule" id="MF_00034"/>
    </source>
</evidence>
<accession>A0KWL7</accession>
<comment type="function">
    <text evidence="1">The RuvA-RuvB-RuvC complex processes Holliday junction (HJ) DNA during genetic recombination and DNA repair. Endonuclease that resolves HJ intermediates. Cleaves cruciform DNA by making single-stranded nicks across the HJ at symmetrical positions within the homologous arms, yielding a 5'-phosphate and a 3'-hydroxyl group; requires a central core of homology in the junction. The consensus cleavage sequence is 5'-(A/T)TT(C/G)-3'. Cleavage occurs on the 3'-side of the TT dinucleotide at the point of strand exchange. HJ branch migration catalyzed by RuvA-RuvB allows RuvC to scan DNA until it finds its consensus sequence, where it cleaves and resolves the cruciform DNA.</text>
</comment>
<comment type="catalytic activity">
    <reaction evidence="1">
        <text>Endonucleolytic cleavage at a junction such as a reciprocal single-stranded crossover between two homologous DNA duplexes (Holliday junction).</text>
        <dbReference type="EC" id="3.1.21.10"/>
    </reaction>
</comment>
<comment type="cofactor">
    <cofactor evidence="1">
        <name>Mg(2+)</name>
        <dbReference type="ChEBI" id="CHEBI:18420"/>
    </cofactor>
    <text evidence="1">Binds 2 Mg(2+) ion per subunit.</text>
</comment>
<comment type="subunit">
    <text evidence="1">Homodimer which binds Holliday junction (HJ) DNA. The HJ becomes 2-fold symmetrical on binding to RuvC with unstacked arms; it has a different conformation from HJ DNA in complex with RuvA. In the full resolvosome a probable DNA-RuvA(4)-RuvB(12)-RuvC(2) complex forms which resolves the HJ.</text>
</comment>
<comment type="subcellular location">
    <subcellularLocation>
        <location evidence="1">Cytoplasm</location>
    </subcellularLocation>
</comment>
<comment type="similarity">
    <text evidence="1">Belongs to the RuvC family.</text>
</comment>
<dbReference type="EC" id="3.1.21.10" evidence="1"/>
<dbReference type="EMBL" id="CP000469">
    <property type="protein sequence ID" value="ABK48186.1"/>
    <property type="molecule type" value="Genomic_DNA"/>
</dbReference>
<dbReference type="RefSeq" id="WP_011716951.1">
    <property type="nucleotide sequence ID" value="NC_008577.1"/>
</dbReference>
<dbReference type="SMR" id="A0KWL7"/>
<dbReference type="STRING" id="94122.Shewana3_1955"/>
<dbReference type="KEGG" id="shn:Shewana3_1955"/>
<dbReference type="eggNOG" id="COG0817">
    <property type="taxonomic scope" value="Bacteria"/>
</dbReference>
<dbReference type="HOGENOM" id="CLU_091257_2_1_6"/>
<dbReference type="OrthoDB" id="9805499at2"/>
<dbReference type="Proteomes" id="UP000002589">
    <property type="component" value="Chromosome"/>
</dbReference>
<dbReference type="GO" id="GO:0005737">
    <property type="term" value="C:cytoplasm"/>
    <property type="evidence" value="ECO:0007669"/>
    <property type="project" value="UniProtKB-SubCell"/>
</dbReference>
<dbReference type="GO" id="GO:0048476">
    <property type="term" value="C:Holliday junction resolvase complex"/>
    <property type="evidence" value="ECO:0007669"/>
    <property type="project" value="UniProtKB-UniRule"/>
</dbReference>
<dbReference type="GO" id="GO:0008821">
    <property type="term" value="F:crossover junction DNA endonuclease activity"/>
    <property type="evidence" value="ECO:0007669"/>
    <property type="project" value="UniProtKB-UniRule"/>
</dbReference>
<dbReference type="GO" id="GO:0003677">
    <property type="term" value="F:DNA binding"/>
    <property type="evidence" value="ECO:0007669"/>
    <property type="project" value="UniProtKB-KW"/>
</dbReference>
<dbReference type="GO" id="GO:0000287">
    <property type="term" value="F:magnesium ion binding"/>
    <property type="evidence" value="ECO:0007669"/>
    <property type="project" value="UniProtKB-UniRule"/>
</dbReference>
<dbReference type="GO" id="GO:0006310">
    <property type="term" value="P:DNA recombination"/>
    <property type="evidence" value="ECO:0007669"/>
    <property type="project" value="UniProtKB-UniRule"/>
</dbReference>
<dbReference type="GO" id="GO:0006281">
    <property type="term" value="P:DNA repair"/>
    <property type="evidence" value="ECO:0007669"/>
    <property type="project" value="UniProtKB-UniRule"/>
</dbReference>
<dbReference type="CDD" id="cd16962">
    <property type="entry name" value="RuvC"/>
    <property type="match status" value="1"/>
</dbReference>
<dbReference type="FunFam" id="3.30.420.10:FF:000002">
    <property type="entry name" value="Crossover junction endodeoxyribonuclease RuvC"/>
    <property type="match status" value="1"/>
</dbReference>
<dbReference type="Gene3D" id="3.30.420.10">
    <property type="entry name" value="Ribonuclease H-like superfamily/Ribonuclease H"/>
    <property type="match status" value="1"/>
</dbReference>
<dbReference type="HAMAP" id="MF_00034">
    <property type="entry name" value="RuvC"/>
    <property type="match status" value="1"/>
</dbReference>
<dbReference type="InterPro" id="IPR012337">
    <property type="entry name" value="RNaseH-like_sf"/>
</dbReference>
<dbReference type="InterPro" id="IPR036397">
    <property type="entry name" value="RNaseH_sf"/>
</dbReference>
<dbReference type="InterPro" id="IPR020563">
    <property type="entry name" value="X-over_junc_endoDNase_Mg_BS"/>
</dbReference>
<dbReference type="InterPro" id="IPR002176">
    <property type="entry name" value="X-over_junc_endoDNase_RuvC"/>
</dbReference>
<dbReference type="NCBIfam" id="TIGR00228">
    <property type="entry name" value="ruvC"/>
    <property type="match status" value="1"/>
</dbReference>
<dbReference type="PANTHER" id="PTHR30194">
    <property type="entry name" value="CROSSOVER JUNCTION ENDODEOXYRIBONUCLEASE RUVC"/>
    <property type="match status" value="1"/>
</dbReference>
<dbReference type="PANTHER" id="PTHR30194:SF3">
    <property type="entry name" value="CROSSOVER JUNCTION ENDODEOXYRIBONUCLEASE RUVC"/>
    <property type="match status" value="1"/>
</dbReference>
<dbReference type="Pfam" id="PF02075">
    <property type="entry name" value="RuvC"/>
    <property type="match status" value="1"/>
</dbReference>
<dbReference type="PRINTS" id="PR00696">
    <property type="entry name" value="RSOLVASERUVC"/>
</dbReference>
<dbReference type="SUPFAM" id="SSF53098">
    <property type="entry name" value="Ribonuclease H-like"/>
    <property type="match status" value="1"/>
</dbReference>
<dbReference type="PROSITE" id="PS01321">
    <property type="entry name" value="RUVC"/>
    <property type="match status" value="1"/>
</dbReference>
<name>RUVC_SHESA</name>
<organism>
    <name type="scientific">Shewanella sp. (strain ANA-3)</name>
    <dbReference type="NCBI Taxonomy" id="94122"/>
    <lineage>
        <taxon>Bacteria</taxon>
        <taxon>Pseudomonadati</taxon>
        <taxon>Pseudomonadota</taxon>
        <taxon>Gammaproteobacteria</taxon>
        <taxon>Alteromonadales</taxon>
        <taxon>Shewanellaceae</taxon>
        <taxon>Shewanella</taxon>
    </lineage>
</organism>
<keyword id="KW-0963">Cytoplasm</keyword>
<keyword id="KW-0227">DNA damage</keyword>
<keyword id="KW-0233">DNA recombination</keyword>
<keyword id="KW-0234">DNA repair</keyword>
<keyword id="KW-0238">DNA-binding</keyword>
<keyword id="KW-0255">Endonuclease</keyword>
<keyword id="KW-0378">Hydrolase</keyword>
<keyword id="KW-0460">Magnesium</keyword>
<keyword id="KW-0479">Metal-binding</keyword>
<keyword id="KW-0540">Nuclease</keyword>
<proteinExistence type="inferred from homology"/>
<sequence length="173" mass="18579">MAIILGVDPGSRITGYGVIQCLGRQQLYLGSGCIRTSGEDLPLRLKQIFDGISEIIRQYQPDEFAIERVFLAKNADSALKLGQARGAAIVAATVANLPVAEYSATQIKNAVVGTGRAKKEQVQHMIQQLLKLPAAPQADAADALGVAVCHYHTNQSLVALSGRATTRTYGRYR</sequence>
<feature type="chain" id="PRO_1000002832" description="Crossover junction endodeoxyribonuclease RuvC">
    <location>
        <begin position="1"/>
        <end position="173"/>
    </location>
</feature>
<feature type="active site" evidence="1">
    <location>
        <position position="8"/>
    </location>
</feature>
<feature type="active site" evidence="1">
    <location>
        <position position="67"/>
    </location>
</feature>
<feature type="active site" evidence="1">
    <location>
        <position position="139"/>
    </location>
</feature>
<feature type="binding site" evidence="1">
    <location>
        <position position="8"/>
    </location>
    <ligand>
        <name>Mg(2+)</name>
        <dbReference type="ChEBI" id="CHEBI:18420"/>
        <label>1</label>
    </ligand>
</feature>
<feature type="binding site" evidence="1">
    <location>
        <position position="67"/>
    </location>
    <ligand>
        <name>Mg(2+)</name>
        <dbReference type="ChEBI" id="CHEBI:18420"/>
        <label>2</label>
    </ligand>
</feature>
<feature type="binding site" evidence="1">
    <location>
        <position position="139"/>
    </location>
    <ligand>
        <name>Mg(2+)</name>
        <dbReference type="ChEBI" id="CHEBI:18420"/>
        <label>1</label>
    </ligand>
</feature>
<reference key="1">
    <citation type="submission" date="2006-09" db="EMBL/GenBank/DDBJ databases">
        <title>Complete sequence of chromosome 1 of Shewanella sp. ANA-3.</title>
        <authorList>
            <person name="Copeland A."/>
            <person name="Lucas S."/>
            <person name="Lapidus A."/>
            <person name="Barry K."/>
            <person name="Detter J.C."/>
            <person name="Glavina del Rio T."/>
            <person name="Hammon N."/>
            <person name="Israni S."/>
            <person name="Dalin E."/>
            <person name="Tice H."/>
            <person name="Pitluck S."/>
            <person name="Chertkov O."/>
            <person name="Brettin T."/>
            <person name="Bruce D."/>
            <person name="Han C."/>
            <person name="Tapia R."/>
            <person name="Gilna P."/>
            <person name="Schmutz J."/>
            <person name="Larimer F."/>
            <person name="Land M."/>
            <person name="Hauser L."/>
            <person name="Kyrpides N."/>
            <person name="Kim E."/>
            <person name="Newman D."/>
            <person name="Salticov C."/>
            <person name="Konstantinidis K."/>
            <person name="Klappenback J."/>
            <person name="Tiedje J."/>
            <person name="Richardson P."/>
        </authorList>
    </citation>
    <scope>NUCLEOTIDE SEQUENCE [LARGE SCALE GENOMIC DNA]</scope>
    <source>
        <strain>ANA-3</strain>
    </source>
</reference>
<protein>
    <recommendedName>
        <fullName evidence="1">Crossover junction endodeoxyribonuclease RuvC</fullName>
        <ecNumber evidence="1">3.1.21.10</ecNumber>
    </recommendedName>
    <alternativeName>
        <fullName evidence="1">Holliday junction nuclease RuvC</fullName>
    </alternativeName>
    <alternativeName>
        <fullName evidence="1">Holliday junction resolvase RuvC</fullName>
    </alternativeName>
</protein>